<name>PLK2_RAT</name>
<reference key="1">
    <citation type="journal article" date="1999" name="EMBO J.">
        <title>The polo-like protein kinases Fnk and Snk associate with a Ca(2+)- and integrin-binding protein and are regulated dynamically with synaptic plasticity.</title>
        <authorList>
            <person name="Kauselmann G."/>
            <person name="Weiler M."/>
            <person name="Wulff P."/>
            <person name="Jessberger S."/>
            <person name="Konietzko U."/>
            <person name="Scafidi J."/>
            <person name="Staubli U."/>
            <person name="Bereiter-Hahn J."/>
            <person name="Strebhardt K."/>
            <person name="Kuhl D."/>
        </authorList>
    </citation>
    <scope>NUCLEOTIDE SEQUENCE [MRNA]</scope>
    <scope>FUNCTION</scope>
    <scope>SUBCELLULAR LOCATION</scope>
    <scope>INTERACTION WITH CIB1</scope>
</reference>
<reference key="2">
    <citation type="journal article" date="2004" name="Genome Res.">
        <title>The status, quality, and expansion of the NIH full-length cDNA project: the Mammalian Gene Collection (MGC).</title>
        <authorList>
            <consortium name="The MGC Project Team"/>
        </authorList>
    </citation>
    <scope>NUCLEOTIDE SEQUENCE [LARGE SCALE MRNA]</scope>
    <source>
        <tissue>Lung</tissue>
    </source>
</reference>
<reference key="3">
    <citation type="journal article" date="2008" name="J. Biol. Chem.">
        <title>Regulation of postsynaptic RapGAP SPAR by Polo-like kinase 2 and the SCFbeta-TRCP ubiquitin ligase in hippocampal neurons.</title>
        <authorList>
            <person name="Ang X.L."/>
            <person name="Seeburg D.P."/>
            <person name="Sheng M."/>
            <person name="Harper J.W."/>
        </authorList>
    </citation>
    <scope>FUNCTION IN PHOSPHORYLATION OF SIPA1L1</scope>
    <scope>MUTAGENESIS OF ASP-202</scope>
</reference>
<reference key="4">
    <citation type="journal article" date="2008" name="Neuron">
        <title>Critical role of CDK5 and Polo-like kinase 2 in homeostatic synaptic plasticity during elevated activity.</title>
        <authorList>
            <person name="Seeburg D.P."/>
            <person name="Feliu-Mojer M."/>
            <person name="Gaiottino J."/>
            <person name="Pak D.T."/>
            <person name="Sheng M."/>
        </authorList>
    </citation>
    <scope>FUNCTION IN PHOSPHORYLATION OF SIPA1L1</scope>
    <scope>MUTAGENESIS OF TRP-504</scope>
</reference>
<reference key="5">
    <citation type="journal article" date="2010" name="Nat. Neurosci.">
        <title>Plk2 attachment to NSF induces homeostatic removal of GluA2 during chronic overexcitation.</title>
        <authorList>
            <person name="Evers D.M."/>
            <person name="Matta J.A."/>
            <person name="Hoe H.S."/>
            <person name="Zarkowsky D."/>
            <person name="Lee S.H."/>
            <person name="Isaac J.T."/>
            <person name="Pak D.T."/>
        </authorList>
    </citation>
    <scope>FUNCTION</scope>
    <scope>INTERACTION WITH NSF</scope>
    <scope>PHOSPHORYLATION AT THR-236</scope>
    <scope>MUTAGENESIS OF LYS-108; THR-236 AND TRP-504</scope>
</reference>
<reference key="6">
    <citation type="journal article" date="2011" name="Neuron">
        <title>Requirement for Plk2 in orchestrated ras and rap signaling, homeostatic structural plasticity, and memory.</title>
        <authorList>
            <person name="Lee K.J."/>
            <person name="Lee Y."/>
            <person name="Rozeboom A."/>
            <person name="Lee J.Y."/>
            <person name="Udagawa N."/>
            <person name="Hoe H.S."/>
            <person name="Pak D.T."/>
        </authorList>
    </citation>
    <scope>FUNCTION</scope>
    <scope>MUTAGENESIS OF LYS-108 AND THR-236</scope>
</reference>
<sequence>MELLRTITYQPAAGTKMCEQALGKACGGDSKKKRPQQPSEDGQSQAQVTPAAPHHHHHHSHSGPEISRIIVDPTTGKRYCRGKVLGKGGFAKCYEMTDLTNNKVYAAKIIPHSRVAKPHQREKIDKEIELHRILHHKHVVQFYHYFEDKENIYILLEYCSRRSMAHILKARKVLTEPEVRYYLRQIVSGLKYLHEQEILHRDLKLGNFFINEAMELKVGDFGLAARLEPLEHRRRTICGTPNYLSPEVLNKQGHGCESDIWALGCVMYTMLLGRPPFETTNLKETYRCIREARYTMPSSLLAPAKHLIASMLSKNPEDRPSLDDIIRHDFFLQGFTPDRLSSSCCHTVPDFHLSSPAKNFFKKAAAALFGGKKDKARYNDTHNKVSKEDEDIYKLRHDLKKTSITQQPSKHRTDEELQPPPTTFAKSGTSAVENKQQIGDAIRMIVRGTLGSCSSSSECLEDSTMGSVADTVARVLRGCLENMPEADCIPKEQLSTSFQWVTKWVDYSNKYGFGYQLSDHTVGVLFNNGAHMSLLPDKKTVHYYAELGQCSVFPATDAPEQFISQVTVLKYFSHYMEENLMDGGDLPSVTDIRRPRLYLLQWLKSDKALMMLFNDGTFQVNFYHDHTKIIICNQNEEYLLTYINEDRISTTFRLTTLLMSGCSLELKHRMEYALNMLLQRCN</sequence>
<gene>
    <name type="primary">Plk2</name>
    <name type="synonym">Snk</name>
</gene>
<proteinExistence type="evidence at protein level"/>
<feature type="chain" id="PRO_0000086563" description="Serine/threonine-protein kinase PLK2">
    <location>
        <begin position="1"/>
        <end position="682"/>
    </location>
</feature>
<feature type="domain" description="Protein kinase" evidence="3">
    <location>
        <begin position="79"/>
        <end position="331"/>
    </location>
</feature>
<feature type="domain" description="POLO box 1" evidence="2">
    <location>
        <begin position="500"/>
        <end position="578"/>
    </location>
</feature>
<feature type="domain" description="POLO box 2" evidence="2">
    <location>
        <begin position="598"/>
        <end position="682"/>
    </location>
</feature>
<feature type="region of interest" description="Disordered" evidence="4">
    <location>
        <begin position="25"/>
        <end position="67"/>
    </location>
</feature>
<feature type="region of interest" description="Disordered" evidence="4">
    <location>
        <begin position="402"/>
        <end position="430"/>
    </location>
</feature>
<feature type="compositionally biased region" description="Polar residues" evidence="4">
    <location>
        <begin position="36"/>
        <end position="48"/>
    </location>
</feature>
<feature type="active site" description="Proton acceptor" evidence="10">
    <location>
        <position position="202"/>
    </location>
</feature>
<feature type="binding site" evidence="3">
    <location>
        <begin position="85"/>
        <end position="93"/>
    </location>
    <ligand>
        <name>ATP</name>
        <dbReference type="ChEBI" id="CHEBI:30616"/>
    </ligand>
</feature>
<feature type="binding site">
    <location>
        <position position="108"/>
    </location>
    <ligand>
        <name>ATP</name>
        <dbReference type="ChEBI" id="CHEBI:30616"/>
    </ligand>
</feature>
<feature type="modified residue" description="Phosphothreonine" evidence="8">
    <location>
        <position position="236"/>
    </location>
</feature>
<feature type="mutagenesis site" description="Loss of kinase activity." evidence="8 9">
    <original>K</original>
    <variation>M</variation>
    <location>
        <position position="108"/>
    </location>
</feature>
<feature type="mutagenesis site" description="Loss of kinase activity." evidence="7">
    <original>D</original>
    <variation>A</variation>
    <location>
        <position position="202"/>
    </location>
</feature>
<feature type="mutagenesis site" description="Mimicks phosphorylation state, leading to increased activity." evidence="8 9">
    <original>T</original>
    <variation>E</variation>
    <location>
        <position position="236"/>
    </location>
</feature>
<feature type="mutagenesis site" description="Abolishes interaction with SIPA1L1." evidence="6 8">
    <original>W</original>
    <variation>A</variation>
    <location>
        <position position="504"/>
    </location>
</feature>
<feature type="mutagenesis site" description="Does not affect interaction with NSF and ability to dissociate NSF from GRIA2." evidence="6 8">
    <original>W</original>
    <variation>F</variation>
    <location>
        <position position="504"/>
    </location>
</feature>
<keyword id="KW-0067">ATP-binding</keyword>
<keyword id="KW-0966">Cell projection</keyword>
<keyword id="KW-0963">Cytoplasm</keyword>
<keyword id="KW-0206">Cytoskeleton</keyword>
<keyword id="KW-0418">Kinase</keyword>
<keyword id="KW-0547">Nucleotide-binding</keyword>
<keyword id="KW-0597">Phosphoprotein</keyword>
<keyword id="KW-1185">Reference proteome</keyword>
<keyword id="KW-0677">Repeat</keyword>
<keyword id="KW-0723">Serine/threonine-protein kinase</keyword>
<keyword id="KW-0808">Transferase</keyword>
<keyword id="KW-0043">Tumor suppressor</keyword>
<accession>Q9R012</accession>
<dbReference type="EC" id="2.7.11.21"/>
<dbReference type="EMBL" id="AF136583">
    <property type="protein sequence ID" value="AAF08366.1"/>
    <property type="molecule type" value="mRNA"/>
</dbReference>
<dbReference type="EMBL" id="BC070878">
    <property type="protein sequence ID" value="AAH70878.1"/>
    <property type="molecule type" value="mRNA"/>
</dbReference>
<dbReference type="RefSeq" id="NP_114009.1">
    <property type="nucleotide sequence ID" value="NM_031821.2"/>
</dbReference>
<dbReference type="SMR" id="Q9R012"/>
<dbReference type="BioGRID" id="249816">
    <property type="interactions" value="5"/>
</dbReference>
<dbReference type="FunCoup" id="Q9R012">
    <property type="interactions" value="140"/>
</dbReference>
<dbReference type="IntAct" id="Q9R012">
    <property type="interactions" value="1"/>
</dbReference>
<dbReference type="MINT" id="Q9R012"/>
<dbReference type="STRING" id="10116.ENSRNOP00000016768"/>
<dbReference type="GlyGen" id="Q9R012">
    <property type="glycosylation" value="1 site"/>
</dbReference>
<dbReference type="iPTMnet" id="Q9R012"/>
<dbReference type="PhosphoSitePlus" id="Q9R012"/>
<dbReference type="PaxDb" id="10116-ENSRNOP00000016768"/>
<dbReference type="Ensembl" id="ENSRNOT00000016768.5">
    <property type="protein sequence ID" value="ENSRNOP00000016768.3"/>
    <property type="gene ID" value="ENSRNOG00000011951.5"/>
</dbReference>
<dbReference type="GeneID" id="83722"/>
<dbReference type="KEGG" id="rno:83722"/>
<dbReference type="AGR" id="RGD:620760"/>
<dbReference type="CTD" id="10769"/>
<dbReference type="RGD" id="620760">
    <property type="gene designation" value="Plk2"/>
</dbReference>
<dbReference type="eggNOG" id="KOG0575">
    <property type="taxonomic scope" value="Eukaryota"/>
</dbReference>
<dbReference type="GeneTree" id="ENSGT00940000158739"/>
<dbReference type="HOGENOM" id="CLU_000288_46_1_1"/>
<dbReference type="InParanoid" id="Q9R012"/>
<dbReference type="OrthoDB" id="45308at9989"/>
<dbReference type="PhylomeDB" id="Q9R012"/>
<dbReference type="TreeFam" id="TF101089"/>
<dbReference type="BRENDA" id="2.7.11.21">
    <property type="organism ID" value="5301"/>
</dbReference>
<dbReference type="Reactome" id="R-RNO-6804115">
    <property type="pathway name" value="TP53 regulates transcription of additional cell cycle genes whose exact role in the p53 pathway remain uncertain"/>
</dbReference>
<dbReference type="PRO" id="PR:Q9R012"/>
<dbReference type="Proteomes" id="UP000002494">
    <property type="component" value="Chromosome 2"/>
</dbReference>
<dbReference type="Bgee" id="ENSRNOG00000011951">
    <property type="expression patterns" value="Expressed in frontal cortex and 20 other cell types or tissues"/>
</dbReference>
<dbReference type="GO" id="GO:0005814">
    <property type="term" value="C:centriole"/>
    <property type="evidence" value="ECO:0000250"/>
    <property type="project" value="UniProtKB"/>
</dbReference>
<dbReference type="GO" id="GO:0005813">
    <property type="term" value="C:centrosome"/>
    <property type="evidence" value="ECO:0000250"/>
    <property type="project" value="UniProtKB"/>
</dbReference>
<dbReference type="GO" id="GO:0000785">
    <property type="term" value="C:chromatin"/>
    <property type="evidence" value="ECO:0000266"/>
    <property type="project" value="RGD"/>
</dbReference>
<dbReference type="GO" id="GO:0005737">
    <property type="term" value="C:cytoplasm"/>
    <property type="evidence" value="ECO:0000266"/>
    <property type="project" value="RGD"/>
</dbReference>
<dbReference type="GO" id="GO:0030425">
    <property type="term" value="C:dendrite"/>
    <property type="evidence" value="ECO:0000314"/>
    <property type="project" value="UniProtKB"/>
</dbReference>
<dbReference type="GO" id="GO:0000776">
    <property type="term" value="C:kinetochore"/>
    <property type="evidence" value="ECO:0000318"/>
    <property type="project" value="GO_Central"/>
</dbReference>
<dbReference type="GO" id="GO:0005634">
    <property type="term" value="C:nucleus"/>
    <property type="evidence" value="ECO:0000318"/>
    <property type="project" value="GO_Central"/>
</dbReference>
<dbReference type="GO" id="GO:0098794">
    <property type="term" value="C:postsynapse"/>
    <property type="evidence" value="ECO:0000314"/>
    <property type="project" value="SynGO"/>
</dbReference>
<dbReference type="GO" id="GO:0000922">
    <property type="term" value="C:spindle pole"/>
    <property type="evidence" value="ECO:0000318"/>
    <property type="project" value="GO_Central"/>
</dbReference>
<dbReference type="GO" id="GO:0005524">
    <property type="term" value="F:ATP binding"/>
    <property type="evidence" value="ECO:0007669"/>
    <property type="project" value="UniProtKB-KW"/>
</dbReference>
<dbReference type="GO" id="GO:0043008">
    <property type="term" value="F:ATP-dependent protein binding"/>
    <property type="evidence" value="ECO:0000266"/>
    <property type="project" value="RGD"/>
</dbReference>
<dbReference type="GO" id="GO:0051117">
    <property type="term" value="F:ATPase binding"/>
    <property type="evidence" value="ECO:0000353"/>
    <property type="project" value="RGD"/>
</dbReference>
<dbReference type="GO" id="GO:0032050">
    <property type="term" value="F:clathrin heavy chain binding"/>
    <property type="evidence" value="ECO:0000353"/>
    <property type="project" value="RGD"/>
</dbReference>
<dbReference type="GO" id="GO:0051020">
    <property type="term" value="F:GTPase binding"/>
    <property type="evidence" value="ECO:0000353"/>
    <property type="project" value="RGD"/>
</dbReference>
<dbReference type="GO" id="GO:0019901">
    <property type="term" value="F:protein kinase binding"/>
    <property type="evidence" value="ECO:0000353"/>
    <property type="project" value="RGD"/>
</dbReference>
<dbReference type="GO" id="GO:0106310">
    <property type="term" value="F:protein serine kinase activity"/>
    <property type="evidence" value="ECO:0007669"/>
    <property type="project" value="RHEA"/>
</dbReference>
<dbReference type="GO" id="GO:0004674">
    <property type="term" value="F:protein serine/threonine kinase activity"/>
    <property type="evidence" value="ECO:0000314"/>
    <property type="project" value="UniProtKB"/>
</dbReference>
<dbReference type="GO" id="GO:0044877">
    <property type="term" value="F:protein-containing complex binding"/>
    <property type="evidence" value="ECO:0000353"/>
    <property type="project" value="RGD"/>
</dbReference>
<dbReference type="GO" id="GO:0000082">
    <property type="term" value="P:G1/S transition of mitotic cell cycle"/>
    <property type="evidence" value="ECO:0000250"/>
    <property type="project" value="UniProtKB"/>
</dbReference>
<dbReference type="GO" id="GO:0060292">
    <property type="term" value="P:long-term synaptic depression"/>
    <property type="evidence" value="ECO:0000314"/>
    <property type="project" value="UniProtKB"/>
</dbReference>
<dbReference type="GO" id="GO:0060291">
    <property type="term" value="P:long-term synaptic potentiation"/>
    <property type="evidence" value="ECO:0000314"/>
    <property type="project" value="UniProtKB"/>
</dbReference>
<dbReference type="GO" id="GO:0007613">
    <property type="term" value="P:memory"/>
    <property type="evidence" value="ECO:0000250"/>
    <property type="project" value="UniProtKB"/>
</dbReference>
<dbReference type="GO" id="GO:0000278">
    <property type="term" value="P:mitotic cell cycle"/>
    <property type="evidence" value="ECO:0000266"/>
    <property type="project" value="RGD"/>
</dbReference>
<dbReference type="GO" id="GO:0007052">
    <property type="term" value="P:mitotic spindle organization"/>
    <property type="evidence" value="ECO:0000250"/>
    <property type="project" value="UniProtKB"/>
</dbReference>
<dbReference type="GO" id="GO:0016525">
    <property type="term" value="P:negative regulation of angiogenesis"/>
    <property type="evidence" value="ECO:0000266"/>
    <property type="project" value="RGD"/>
</dbReference>
<dbReference type="GO" id="GO:0043066">
    <property type="term" value="P:negative regulation of apoptotic process"/>
    <property type="evidence" value="ECO:0000250"/>
    <property type="project" value="UniProtKB"/>
</dbReference>
<dbReference type="GO" id="GO:0071866">
    <property type="term" value="P:negative regulation of apoptotic process in bone marrow cell"/>
    <property type="evidence" value="ECO:0000266"/>
    <property type="project" value="RGD"/>
</dbReference>
<dbReference type="GO" id="GO:2000773">
    <property type="term" value="P:negative regulation of cellular senescence"/>
    <property type="evidence" value="ECO:0000266"/>
    <property type="project" value="RGD"/>
</dbReference>
<dbReference type="GO" id="GO:0061000">
    <property type="term" value="P:negative regulation of dendritic spine development"/>
    <property type="evidence" value="ECO:0000315"/>
    <property type="project" value="RGD"/>
</dbReference>
<dbReference type="GO" id="GO:0090394">
    <property type="term" value="P:negative regulation of excitatory postsynaptic potential"/>
    <property type="evidence" value="ECO:0000315"/>
    <property type="project" value="RGD"/>
</dbReference>
<dbReference type="GO" id="GO:2000009">
    <property type="term" value="P:negative regulation of protein localization to cell surface"/>
    <property type="evidence" value="ECO:0000315"/>
    <property type="project" value="RGD"/>
</dbReference>
<dbReference type="GO" id="GO:0010508">
    <property type="term" value="P:positive regulation of autophagy"/>
    <property type="evidence" value="ECO:0000266"/>
    <property type="project" value="RGD"/>
</dbReference>
<dbReference type="GO" id="GO:0090050">
    <property type="term" value="P:positive regulation of cell migration involved in sprouting angiogenesis"/>
    <property type="evidence" value="ECO:0000266"/>
    <property type="project" value="RGD"/>
</dbReference>
<dbReference type="GO" id="GO:0032436">
    <property type="term" value="P:positive regulation of proteasomal ubiquitin-dependent protein catabolic process"/>
    <property type="evidence" value="ECO:0000315"/>
    <property type="project" value="RGD"/>
</dbReference>
<dbReference type="GO" id="GO:0045732">
    <property type="term" value="P:positive regulation of protein catabolic process"/>
    <property type="evidence" value="ECO:0000266"/>
    <property type="project" value="RGD"/>
</dbReference>
<dbReference type="GO" id="GO:0002092">
    <property type="term" value="P:positive regulation of receptor internalization"/>
    <property type="evidence" value="ECO:0000315"/>
    <property type="project" value="RGD"/>
</dbReference>
<dbReference type="GO" id="GO:0006468">
    <property type="term" value="P:protein phosphorylation"/>
    <property type="evidence" value="ECO:0000314"/>
    <property type="project" value="UniProtKB"/>
</dbReference>
<dbReference type="GO" id="GO:0032486">
    <property type="term" value="P:Rap protein signal transduction"/>
    <property type="evidence" value="ECO:0000314"/>
    <property type="project" value="UniProtKB"/>
</dbReference>
<dbReference type="GO" id="GO:0007265">
    <property type="term" value="P:Ras protein signal transduction"/>
    <property type="evidence" value="ECO:0000314"/>
    <property type="project" value="UniProtKB"/>
</dbReference>
<dbReference type="GO" id="GO:0046599">
    <property type="term" value="P:regulation of centriole replication"/>
    <property type="evidence" value="ECO:0000250"/>
    <property type="project" value="UniProtKB"/>
</dbReference>
<dbReference type="GO" id="GO:0048167">
    <property type="term" value="P:regulation of synaptic plasticity"/>
    <property type="evidence" value="ECO:0000314"/>
    <property type="project" value="UniProtKB"/>
</dbReference>
<dbReference type="GO" id="GO:0140252">
    <property type="term" value="P:regulation protein catabolic process at postsynapse"/>
    <property type="evidence" value="ECO:0000314"/>
    <property type="project" value="SynGO"/>
</dbReference>
<dbReference type="CDD" id="cd13118">
    <property type="entry name" value="POLO_box_1"/>
    <property type="match status" value="1"/>
</dbReference>
<dbReference type="CDD" id="cd13117">
    <property type="entry name" value="POLO_box_2"/>
    <property type="match status" value="1"/>
</dbReference>
<dbReference type="CDD" id="cd14188">
    <property type="entry name" value="STKc_PLK2"/>
    <property type="match status" value="1"/>
</dbReference>
<dbReference type="FunFam" id="1.10.510.10:FF:001498">
    <property type="entry name" value="Serine/threonine-protein kinase PLK"/>
    <property type="match status" value="1"/>
</dbReference>
<dbReference type="FunFam" id="3.30.1120.30:FF:000001">
    <property type="entry name" value="Serine/threonine-protein kinase PLK"/>
    <property type="match status" value="1"/>
</dbReference>
<dbReference type="FunFam" id="3.30.200.20:FF:000091">
    <property type="entry name" value="Serine/threonine-protein kinase PLK"/>
    <property type="match status" value="1"/>
</dbReference>
<dbReference type="Gene3D" id="3.30.200.20">
    <property type="entry name" value="Phosphorylase Kinase, domain 1"/>
    <property type="match status" value="1"/>
</dbReference>
<dbReference type="Gene3D" id="3.30.1120.30">
    <property type="entry name" value="POLO box domain"/>
    <property type="match status" value="2"/>
</dbReference>
<dbReference type="Gene3D" id="1.10.510.10">
    <property type="entry name" value="Transferase(Phosphotransferase) domain 1"/>
    <property type="match status" value="1"/>
</dbReference>
<dbReference type="InterPro" id="IPR011009">
    <property type="entry name" value="Kinase-like_dom_sf"/>
</dbReference>
<dbReference type="InterPro" id="IPR042825">
    <property type="entry name" value="PLK2_STKc"/>
</dbReference>
<dbReference type="InterPro" id="IPR033701">
    <property type="entry name" value="POLO_box_1"/>
</dbReference>
<dbReference type="InterPro" id="IPR033695">
    <property type="entry name" value="POLO_box_2"/>
</dbReference>
<dbReference type="InterPro" id="IPR000959">
    <property type="entry name" value="POLO_box_dom"/>
</dbReference>
<dbReference type="InterPro" id="IPR036947">
    <property type="entry name" value="POLO_box_dom_sf"/>
</dbReference>
<dbReference type="InterPro" id="IPR000719">
    <property type="entry name" value="Prot_kinase_dom"/>
</dbReference>
<dbReference type="InterPro" id="IPR017441">
    <property type="entry name" value="Protein_kinase_ATP_BS"/>
</dbReference>
<dbReference type="InterPro" id="IPR008271">
    <property type="entry name" value="Ser/Thr_kinase_AS"/>
</dbReference>
<dbReference type="PANTHER" id="PTHR24345">
    <property type="entry name" value="SERINE/THREONINE-PROTEIN KINASE PLK"/>
    <property type="match status" value="1"/>
</dbReference>
<dbReference type="PANTHER" id="PTHR24345:SF44">
    <property type="entry name" value="SERINE_THREONINE-PROTEIN KINASE PLK2"/>
    <property type="match status" value="1"/>
</dbReference>
<dbReference type="Pfam" id="PF00069">
    <property type="entry name" value="Pkinase"/>
    <property type="match status" value="1"/>
</dbReference>
<dbReference type="Pfam" id="PF00659">
    <property type="entry name" value="POLO_box"/>
    <property type="match status" value="2"/>
</dbReference>
<dbReference type="SMART" id="SM00220">
    <property type="entry name" value="S_TKc"/>
    <property type="match status" value="1"/>
</dbReference>
<dbReference type="SUPFAM" id="SSF82615">
    <property type="entry name" value="Polo-box domain"/>
    <property type="match status" value="2"/>
</dbReference>
<dbReference type="SUPFAM" id="SSF56112">
    <property type="entry name" value="Protein kinase-like (PK-like)"/>
    <property type="match status" value="1"/>
</dbReference>
<dbReference type="PROSITE" id="PS50078">
    <property type="entry name" value="POLO_BOX"/>
    <property type="match status" value="2"/>
</dbReference>
<dbReference type="PROSITE" id="PS00107">
    <property type="entry name" value="PROTEIN_KINASE_ATP"/>
    <property type="match status" value="1"/>
</dbReference>
<dbReference type="PROSITE" id="PS50011">
    <property type="entry name" value="PROTEIN_KINASE_DOM"/>
    <property type="match status" value="1"/>
</dbReference>
<dbReference type="PROSITE" id="PS00108">
    <property type="entry name" value="PROTEIN_KINASE_ST"/>
    <property type="match status" value="1"/>
</dbReference>
<evidence type="ECO:0000250" key="1"/>
<evidence type="ECO:0000255" key="2">
    <source>
        <dbReference type="PROSITE-ProRule" id="PRU00154"/>
    </source>
</evidence>
<evidence type="ECO:0000255" key="3">
    <source>
        <dbReference type="PROSITE-ProRule" id="PRU00159"/>
    </source>
</evidence>
<evidence type="ECO:0000256" key="4">
    <source>
        <dbReference type="SAM" id="MobiDB-lite"/>
    </source>
</evidence>
<evidence type="ECO:0000269" key="5">
    <source>
    </source>
</evidence>
<evidence type="ECO:0000269" key="6">
    <source>
    </source>
</evidence>
<evidence type="ECO:0000269" key="7">
    <source>
    </source>
</evidence>
<evidence type="ECO:0000269" key="8">
    <source>
    </source>
</evidence>
<evidence type="ECO:0000269" key="9">
    <source>
    </source>
</evidence>
<evidence type="ECO:0000305" key="10"/>
<organism>
    <name type="scientific">Rattus norvegicus</name>
    <name type="common">Rat</name>
    <dbReference type="NCBI Taxonomy" id="10116"/>
    <lineage>
        <taxon>Eukaryota</taxon>
        <taxon>Metazoa</taxon>
        <taxon>Chordata</taxon>
        <taxon>Craniata</taxon>
        <taxon>Vertebrata</taxon>
        <taxon>Euteleostomi</taxon>
        <taxon>Mammalia</taxon>
        <taxon>Eutheria</taxon>
        <taxon>Euarchontoglires</taxon>
        <taxon>Glires</taxon>
        <taxon>Rodentia</taxon>
        <taxon>Myomorpha</taxon>
        <taxon>Muroidea</taxon>
        <taxon>Muridae</taxon>
        <taxon>Murinae</taxon>
        <taxon>Rattus</taxon>
    </lineage>
</organism>
<comment type="function">
    <text evidence="5 6 7 8 9">Tumor suppressor serine/threonine-protein kinase involved in synaptic plasticity, centriole duplication and G1/S phase transition. Polo-like kinases act by binding and phosphorylating proteins that are already phosphorylated on a specific motif recognized by the POLO box domains. Phosphorylates CPAP, NPM1, RAPGEF2, RASGRF1, SNCA, SIPA1L1 and SYNGAP1. Plays a key role in synaptic plasticity and memory by regulating the Ras and Rap protein signaling: required for overactivity-dependent spine remodeling by phosphorylating the Ras activator RASGRF1 and the Rap inhibitor SIPA1L1 leading to their degradation by the proteasome. Conversely, phosphorylates the Rap activator RAPGEF2 and the Ras inhibitor SYNGAP1, promoting their activity. Also regulates synaptic plasticity independently of kinase activity, via its interaction with NSF that disrupts the interaction between NSF and the GRIA2 subunit of AMPARs, leading to a rapid rundown of AMPAR-mediated current that occludes long term depression. Required for procentriole formation and centriole duplication by phosphorylating CPAP and NPM1, respectively. Its induction by p53/TP53 suggests that it may participate in the mitotic checkpoint following stress.</text>
</comment>
<comment type="catalytic activity">
    <reaction>
        <text>L-seryl-[protein] + ATP = O-phospho-L-seryl-[protein] + ADP + H(+)</text>
        <dbReference type="Rhea" id="RHEA:17989"/>
        <dbReference type="Rhea" id="RHEA-COMP:9863"/>
        <dbReference type="Rhea" id="RHEA-COMP:11604"/>
        <dbReference type="ChEBI" id="CHEBI:15378"/>
        <dbReference type="ChEBI" id="CHEBI:29999"/>
        <dbReference type="ChEBI" id="CHEBI:30616"/>
        <dbReference type="ChEBI" id="CHEBI:83421"/>
        <dbReference type="ChEBI" id="CHEBI:456216"/>
        <dbReference type="EC" id="2.7.11.21"/>
    </reaction>
</comment>
<comment type="catalytic activity">
    <reaction>
        <text>L-threonyl-[protein] + ATP = O-phospho-L-threonyl-[protein] + ADP + H(+)</text>
        <dbReference type="Rhea" id="RHEA:46608"/>
        <dbReference type="Rhea" id="RHEA-COMP:11060"/>
        <dbReference type="Rhea" id="RHEA-COMP:11605"/>
        <dbReference type="ChEBI" id="CHEBI:15378"/>
        <dbReference type="ChEBI" id="CHEBI:30013"/>
        <dbReference type="ChEBI" id="CHEBI:30616"/>
        <dbReference type="ChEBI" id="CHEBI:61977"/>
        <dbReference type="ChEBI" id="CHEBI:456216"/>
        <dbReference type="EC" id="2.7.11.21"/>
    </reaction>
</comment>
<comment type="activity regulation">
    <text evidence="1">Activated by phosphorylation of Thr-236. Once activated, activity is stimulated by binding target proteins (By similarity).</text>
</comment>
<comment type="subunit">
    <text evidence="1 5 8">Interacts with CIB1 (By similarity). Interacts with NSF; causing NSF dissociation from GRIA2.</text>
</comment>
<comment type="subcellular location">
    <subcellularLocation>
        <location evidence="1">Cytoplasm</location>
        <location evidence="1">Cytoskeleton</location>
        <location evidence="1">Microtubule organizing center</location>
        <location evidence="1">Centrosome</location>
        <location evidence="1">Centriole</location>
    </subcellularLocation>
    <subcellularLocation>
        <location evidence="5">Cell projection</location>
        <location evidence="5">Dendrite</location>
    </subcellularLocation>
    <text evidence="1">Localizes to centrosomes during early G1 phase where it only associates to the mother centriole and then distributes equally to both mother and daughter centrioles at the onset of S phase.</text>
</comment>
<comment type="domain">
    <text evidence="1">The POLO box domains act as phosphopeptide-binding module that recognizes and binds serine-[phosphothreonine/phosphoserine]-(proline/X) motifs. PLK2 recognizes and binds docking proteins that are already phosphorylated on these motifs, and then phosphorylates them (By similarity).</text>
</comment>
<comment type="PTM">
    <text evidence="8">Catalytic activity is enhanced by phosphorylation of Thr-236.</text>
</comment>
<comment type="similarity">
    <text evidence="3">Belongs to the protein kinase superfamily. Ser/Thr protein kinase family. CDC5/Polo subfamily.</text>
</comment>
<protein>
    <recommendedName>
        <fullName>Serine/threonine-protein kinase PLK2</fullName>
        <ecNumber>2.7.11.21</ecNumber>
    </recommendedName>
    <alternativeName>
        <fullName>Polo-like kinase 2</fullName>
        <shortName>PLK-2</shortName>
    </alternativeName>
    <alternativeName>
        <fullName>Serine/threonine-protein kinase SNK</fullName>
    </alternativeName>
    <alternativeName>
        <fullName>Serum-inducible kinase</fullName>
    </alternativeName>
</protein>